<protein>
    <recommendedName>
        <fullName evidence="4">NLP effector protein 13</fullName>
    </recommendedName>
    <alternativeName>
        <fullName evidence="3">Necrosis-inducing protein 13</fullName>
    </alternativeName>
    <alternativeName>
        <fullName evidence="3">Nep1-like protein 13</fullName>
    </alternativeName>
</protein>
<evidence type="ECO:0000250" key="1">
    <source>
        <dbReference type="UniProtKB" id="L7NCR0"/>
    </source>
</evidence>
<evidence type="ECO:0000269" key="2">
    <source>
    </source>
</evidence>
<evidence type="ECO:0000303" key="3">
    <source>
    </source>
</evidence>
<evidence type="ECO:0000303" key="4">
    <source>
    </source>
</evidence>
<evidence type="ECO:0000305" key="5"/>
<evidence type="ECO:0000305" key="6">
    <source>
    </source>
</evidence>
<evidence type="ECO:0000305" key="7">
    <source>
    </source>
</evidence>
<proteinExistence type="evidence at transcript level"/>
<reference key="1">
    <citation type="journal article" date="2011" name="Genet. Mol. Res.">
        <title>Identification of 18 genes encoding necrosis-inducing proteins from the plant pathogen Phytophthora capsici (Pythiaceae: Oomycetes).</title>
        <authorList>
            <person name="Feng B.Z."/>
            <person name="Li P.Q."/>
            <person name="Fu L."/>
            <person name="Sun B.B."/>
            <person name="Zhang X.G."/>
        </authorList>
    </citation>
    <scope>NUCLEOTIDE SEQUENCE [GENOMIC DNA]</scope>
    <scope>DOMAIN</scope>
</reference>
<reference key="2">
    <citation type="journal article" date="2014" name="BMC Plant Biol.">
        <title>Characterization of necrosis-inducing NLP proteins in Phytophthora capsici.</title>
        <authorList>
            <person name="Feng B.Z."/>
            <person name="Zhu X.P."/>
            <person name="Fu L."/>
            <person name="Lv R.F."/>
            <person name="Storey D."/>
            <person name="Tooley P."/>
            <person name="Zhang X.G."/>
        </authorList>
    </citation>
    <scope>INDUCTION</scope>
    <scope>FUNCTION</scope>
</reference>
<gene>
    <name evidence="4" type="primary">NLP13</name>
    <name evidence="3" type="synonym">NPP13</name>
</gene>
<comment type="function">
    <text evidence="2">Secreted effector that contributes moderately to virulence during infection by P.capsici. Causes only small yellow areas at 3 days after inoculation of host C.annuum leaves; these areas expand somewhat and became necrotic at 7 days after inoculation. Leads only to chlorotic areas, without necrosis at 7 days after non-host N.benthamiana leaves infection.</text>
</comment>
<comment type="subcellular location">
    <subcellularLocation>
        <location evidence="6">Secreted</location>
    </subcellularLocation>
</comment>
<comment type="induction">
    <text evidence="2">Expression gradually increases to a maximum at 7 days after inoculation of pepper leaves.</text>
</comment>
<comment type="domain">
    <text evidence="1">Key residues/motif important for the effector activities are degenerated in most NLPs, including the nlp24 peptide consisting of the conserved region I (11-aa immunogenic part) and conserved region II (the heptapeptide GHRHDWE motif) that is important for phytotoxic activity.</text>
</comment>
<comment type="similarity">
    <text evidence="5">Belongs to the Necrosis inducing protein (NPP1) family.</text>
</comment>
<sequence>MYSWYFPKDSPSTGLGHRHDWEHVIVWIDNPEVPEPKILGVTPSAHSGYSSQVPPDADKVDGSSVKVKYLSKWPINHALESTGEGGDFQDLIMWTQMTDAAREGLSKTGWGKANVPMVDGNFEAKLGKAWPFGEKK</sequence>
<dbReference type="EMBL" id="HM543179">
    <property type="protein sequence ID" value="AEJ88244.1"/>
    <property type="molecule type" value="Genomic_DNA"/>
</dbReference>
<dbReference type="SMR" id="L7NCQ1"/>
<dbReference type="VEuPathDB" id="FungiDB:DVH05_013302"/>
<dbReference type="GO" id="GO:0005576">
    <property type="term" value="C:extracellular region"/>
    <property type="evidence" value="ECO:0007669"/>
    <property type="project" value="UniProtKB-SubCell"/>
</dbReference>
<dbReference type="InterPro" id="IPR008701">
    <property type="entry name" value="NPP1"/>
</dbReference>
<dbReference type="PANTHER" id="PTHR33657">
    <property type="entry name" value="DOMAIN PROTEIN, PUTATIVE (AFU_ORTHOLOGUE AFUA_5G00600)-RELATED"/>
    <property type="match status" value="1"/>
</dbReference>
<dbReference type="PANTHER" id="PTHR33657:SF8">
    <property type="entry name" value="DOMAIN PROTEIN, PUTATIVE (AFU_ORTHOLOGUE AFUA_5G00600)-RELATED"/>
    <property type="match status" value="1"/>
</dbReference>
<dbReference type="Pfam" id="PF05630">
    <property type="entry name" value="NPP1"/>
    <property type="match status" value="1"/>
</dbReference>
<accession>L7NCQ1</accession>
<keyword id="KW-0964">Secreted</keyword>
<keyword id="KW-0843">Virulence</keyword>
<feature type="chain" id="PRO_0000447426" description="NLP effector protein 13">
    <location>
        <begin position="1"/>
        <end position="136"/>
    </location>
</feature>
<feature type="short sequence motif" description="Conserved undecapeptide motif I" evidence="1">
    <location>
        <begin position="1"/>
        <end position="9"/>
    </location>
</feature>
<feature type="short sequence motif" description="Hepta-peptide GHRHDWE motif II" evidence="7">
    <location>
        <begin position="16"/>
        <end position="22"/>
    </location>
</feature>
<organism>
    <name type="scientific">Phytophthora capsici</name>
    <dbReference type="NCBI Taxonomy" id="4784"/>
    <lineage>
        <taxon>Eukaryota</taxon>
        <taxon>Sar</taxon>
        <taxon>Stramenopiles</taxon>
        <taxon>Oomycota</taxon>
        <taxon>Peronosporales</taxon>
        <taxon>Peronosporaceae</taxon>
        <taxon>Phytophthora</taxon>
    </lineage>
</organism>
<name>NLP13_PHYCP</name>